<proteinExistence type="inferred from homology"/>
<accession>Q95157</accession>
<feature type="chain" id="PRO_0000150802" description="Olfactory receptor-like protein OLF4">
    <location>
        <begin position="1"/>
        <end position="309"/>
    </location>
</feature>
<feature type="topological domain" description="Extracellular" evidence="1">
    <location>
        <begin position="1"/>
        <end position="25"/>
    </location>
</feature>
<feature type="transmembrane region" description="Helical; Name=1" evidence="1">
    <location>
        <begin position="26"/>
        <end position="49"/>
    </location>
</feature>
<feature type="topological domain" description="Cytoplasmic" evidence="1">
    <location>
        <begin position="50"/>
        <end position="57"/>
    </location>
</feature>
<feature type="transmembrane region" description="Helical; Name=2" evidence="1">
    <location>
        <begin position="58"/>
        <end position="79"/>
    </location>
</feature>
<feature type="topological domain" description="Extracellular" evidence="1">
    <location>
        <begin position="80"/>
        <end position="100"/>
    </location>
</feature>
<feature type="transmembrane region" description="Helical; Name=3" evidence="1">
    <location>
        <begin position="101"/>
        <end position="120"/>
    </location>
</feature>
<feature type="topological domain" description="Cytoplasmic" evidence="1">
    <location>
        <begin position="121"/>
        <end position="139"/>
    </location>
</feature>
<feature type="transmembrane region" description="Helical; Name=4" evidence="1">
    <location>
        <begin position="140"/>
        <end position="158"/>
    </location>
</feature>
<feature type="topological domain" description="Extracellular" evidence="1">
    <location>
        <begin position="159"/>
        <end position="196"/>
    </location>
</feature>
<feature type="transmembrane region" description="Helical; Name=5" evidence="1">
    <location>
        <begin position="197"/>
        <end position="219"/>
    </location>
</feature>
<feature type="topological domain" description="Cytoplasmic" evidence="1">
    <location>
        <begin position="220"/>
        <end position="236"/>
    </location>
</feature>
<feature type="transmembrane region" description="Helical; Name=6" evidence="1">
    <location>
        <begin position="237"/>
        <end position="260"/>
    </location>
</feature>
<feature type="topological domain" description="Extracellular" evidence="1">
    <location>
        <begin position="261"/>
        <end position="272"/>
    </location>
</feature>
<feature type="transmembrane region" description="Helical; Name=7" evidence="1">
    <location>
        <begin position="273"/>
        <end position="292"/>
    </location>
</feature>
<feature type="topological domain" description="Cytoplasmic" evidence="1">
    <location>
        <begin position="293"/>
        <end position="309"/>
    </location>
</feature>
<feature type="glycosylation site" description="N-linked (GlcNAc...) asparagine" evidence="1">
    <location>
        <position position="5"/>
    </location>
</feature>
<organism>
    <name type="scientific">Canis lupus familiaris</name>
    <name type="common">Dog</name>
    <name type="synonym">Canis familiaris</name>
    <dbReference type="NCBI Taxonomy" id="9615"/>
    <lineage>
        <taxon>Eukaryota</taxon>
        <taxon>Metazoa</taxon>
        <taxon>Chordata</taxon>
        <taxon>Craniata</taxon>
        <taxon>Vertebrata</taxon>
        <taxon>Euteleostomi</taxon>
        <taxon>Mammalia</taxon>
        <taxon>Eutheria</taxon>
        <taxon>Laurasiatheria</taxon>
        <taxon>Carnivora</taxon>
        <taxon>Caniformia</taxon>
        <taxon>Canidae</taxon>
        <taxon>Canis</taxon>
    </lineage>
</organism>
<evidence type="ECO:0000255" key="1"/>
<evidence type="ECO:0000255" key="2">
    <source>
        <dbReference type="PROSITE-ProRule" id="PRU00521"/>
    </source>
</evidence>
<comment type="function">
    <text>Putative odorant or sperm cell receptor.</text>
</comment>
<comment type="subcellular location">
    <subcellularLocation>
        <location>Cell membrane</location>
        <topology>Multi-pass membrane protein</topology>
    </subcellularLocation>
</comment>
<comment type="similarity">
    <text evidence="2">Belongs to the G-protein coupled receptor 1 family.</text>
</comment>
<protein>
    <recommendedName>
        <fullName>Olfactory receptor-like protein OLF4</fullName>
    </recommendedName>
</protein>
<name>OLF4_CANLF</name>
<dbReference type="EMBL" id="U53682">
    <property type="protein sequence ID" value="AAB37242.1"/>
    <property type="molecule type" value="Genomic_DNA"/>
</dbReference>
<dbReference type="RefSeq" id="NP_001013440.1">
    <property type="nucleotide sequence ID" value="NM_001013422.1"/>
</dbReference>
<dbReference type="SMR" id="Q95157"/>
<dbReference type="STRING" id="9615.ENSCAFP00000038784"/>
<dbReference type="PaxDb" id="9612-ENSCAFP00000038784"/>
<dbReference type="GeneID" id="484883"/>
<dbReference type="KEGG" id="cfa:484883"/>
<dbReference type="CTD" id="484883"/>
<dbReference type="eggNOG" id="ENOG502RTYS">
    <property type="taxonomic scope" value="Eukaryota"/>
</dbReference>
<dbReference type="InParanoid" id="Q95157"/>
<dbReference type="OrthoDB" id="24126at33554"/>
<dbReference type="Proteomes" id="UP000002254">
    <property type="component" value="Unplaced"/>
</dbReference>
<dbReference type="Proteomes" id="UP000694429">
    <property type="component" value="Unplaced"/>
</dbReference>
<dbReference type="Proteomes" id="UP000694542">
    <property type="component" value="Unplaced"/>
</dbReference>
<dbReference type="Proteomes" id="UP000805418">
    <property type="component" value="Unplaced"/>
</dbReference>
<dbReference type="GO" id="GO:0005886">
    <property type="term" value="C:plasma membrane"/>
    <property type="evidence" value="ECO:0000318"/>
    <property type="project" value="GO_Central"/>
</dbReference>
<dbReference type="GO" id="GO:0004930">
    <property type="term" value="F:G protein-coupled receptor activity"/>
    <property type="evidence" value="ECO:0007669"/>
    <property type="project" value="UniProtKB-KW"/>
</dbReference>
<dbReference type="GO" id="GO:0004984">
    <property type="term" value="F:olfactory receptor activity"/>
    <property type="evidence" value="ECO:0000318"/>
    <property type="project" value="GO_Central"/>
</dbReference>
<dbReference type="GO" id="GO:0007165">
    <property type="term" value="P:signal transduction"/>
    <property type="evidence" value="ECO:0000318"/>
    <property type="project" value="GO_Central"/>
</dbReference>
<dbReference type="CDD" id="cd15234">
    <property type="entry name" value="7tmA_OR7-like"/>
    <property type="match status" value="1"/>
</dbReference>
<dbReference type="FunFam" id="1.10.1220.70:FF:000001">
    <property type="entry name" value="Olfactory receptor"/>
    <property type="match status" value="1"/>
</dbReference>
<dbReference type="FunFam" id="1.20.1070.10:FF:000009">
    <property type="entry name" value="Olfactory receptor"/>
    <property type="match status" value="1"/>
</dbReference>
<dbReference type="Gene3D" id="1.20.1070.10">
    <property type="entry name" value="Rhodopsin 7-helix transmembrane proteins"/>
    <property type="match status" value="1"/>
</dbReference>
<dbReference type="InterPro" id="IPR000276">
    <property type="entry name" value="GPCR_Rhodpsn"/>
</dbReference>
<dbReference type="InterPro" id="IPR017452">
    <property type="entry name" value="GPCR_Rhodpsn_7TM"/>
</dbReference>
<dbReference type="InterPro" id="IPR000725">
    <property type="entry name" value="Olfact_rcpt"/>
</dbReference>
<dbReference type="PANTHER" id="PTHR48001">
    <property type="entry name" value="OLFACTORY RECEPTOR"/>
    <property type="match status" value="1"/>
</dbReference>
<dbReference type="Pfam" id="PF13853">
    <property type="entry name" value="7tm_4"/>
    <property type="match status" value="1"/>
</dbReference>
<dbReference type="PRINTS" id="PR00237">
    <property type="entry name" value="GPCRRHODOPSN"/>
</dbReference>
<dbReference type="PRINTS" id="PR00245">
    <property type="entry name" value="OLFACTORYR"/>
</dbReference>
<dbReference type="SUPFAM" id="SSF81321">
    <property type="entry name" value="Family A G protein-coupled receptor-like"/>
    <property type="match status" value="1"/>
</dbReference>
<dbReference type="PROSITE" id="PS00237">
    <property type="entry name" value="G_PROTEIN_RECEP_F1_1"/>
    <property type="match status" value="1"/>
</dbReference>
<dbReference type="PROSITE" id="PS50262">
    <property type="entry name" value="G_PROTEIN_RECEP_F1_2"/>
    <property type="match status" value="1"/>
</dbReference>
<keyword id="KW-1003">Cell membrane</keyword>
<keyword id="KW-0297">G-protein coupled receptor</keyword>
<keyword id="KW-0325">Glycoprotein</keyword>
<keyword id="KW-0472">Membrane</keyword>
<keyword id="KW-0552">Olfaction</keyword>
<keyword id="KW-0675">Receptor</keyword>
<keyword id="KW-1185">Reference proteome</keyword>
<keyword id="KW-0716">Sensory transduction</keyword>
<keyword id="KW-0807">Transducer</keyword>
<keyword id="KW-0812">Transmembrane</keyword>
<keyword id="KW-1133">Transmembrane helix</keyword>
<reference key="1">
    <citation type="journal article" date="1996" name="Proc. Natl. Acad. Sci. U.S.A.">
        <title>Organization and expression of canine olfactory receptor genes.</title>
        <authorList>
            <person name="Issel-Tarver L."/>
            <person name="Rine J."/>
        </authorList>
    </citation>
    <scope>NUCLEOTIDE SEQUENCE [GENOMIC DNA]</scope>
</reference>
<sequence length="309" mass="35046">MELENDTRIPEFLLLGFSEEPKLQPFLFGLFLSMYLVTILGNLLLILAVSSDSHLHTPMYFFLANLSFVDICFTCTTIPKMLVNIQTQRKVITYESCIIQMYFFELFAGIDNFLLTVMAYDRYMAICYPLHYMVIMNPQLCSLLLLVSWIMSALHSLLQTLMVLRLSFCTHFQIPHFFCELNQMIQLACSDTFLNNMMLYFAAILLGVAPLVGVLYSYFKIVSSIRGISSAHSKYKAFSTCASHLSVVSLFYCTSLGVYLSSAAPQSTHTSSVASVMYTVVTPMLNPFIYSLRNKDIKGALNVFFRGKP</sequence>